<comment type="function">
    <text evidence="1">Specifically methylates the N4 position of cytidine in position 1402 (C1402) of 16S rRNA.</text>
</comment>
<comment type="catalytic activity">
    <reaction evidence="1">
        <text>cytidine(1402) in 16S rRNA + S-adenosyl-L-methionine = N(4)-methylcytidine(1402) in 16S rRNA + S-adenosyl-L-homocysteine + H(+)</text>
        <dbReference type="Rhea" id="RHEA:42928"/>
        <dbReference type="Rhea" id="RHEA-COMP:10286"/>
        <dbReference type="Rhea" id="RHEA-COMP:10287"/>
        <dbReference type="ChEBI" id="CHEBI:15378"/>
        <dbReference type="ChEBI" id="CHEBI:57856"/>
        <dbReference type="ChEBI" id="CHEBI:59789"/>
        <dbReference type="ChEBI" id="CHEBI:74506"/>
        <dbReference type="ChEBI" id="CHEBI:82748"/>
        <dbReference type="EC" id="2.1.1.199"/>
    </reaction>
</comment>
<comment type="subcellular location">
    <subcellularLocation>
        <location evidence="1">Cytoplasm</location>
    </subcellularLocation>
</comment>
<comment type="similarity">
    <text evidence="1">Belongs to the methyltransferase superfamily. RsmH family.</text>
</comment>
<sequence>MAKHTTVLLDEAVNGLGLKTDGIYVDGTFGRGGHSRHILGQLGAQGRLIAIDRDPRAIETGEALMKEDPRFTIIHGPFSGLAEYIKELGLAGQIDGVLLDLGVSSPQIDDADRGFSFMRDGPLDMRMDPTSGISAAQWLAKADVDDIGWVLKTFGEEKFAFRIARAIVADRTETPFLRTLQLAQLIERLCPKREKKKHPATRSFQAIRIYVNSELEEIHKVLDGALEILAIGGQLSVISFHSLEDRIVKRFIRKQEKGREYPPGLPLTEAQMQHGKTLKSLAKALKPSAEEINENTRARSSVLRVAQKIAEPESE</sequence>
<accession>A1SU11</accession>
<reference key="1">
    <citation type="journal article" date="2008" name="BMC Genomics">
        <title>Genomics of an extreme psychrophile, Psychromonas ingrahamii.</title>
        <authorList>
            <person name="Riley M."/>
            <person name="Staley J.T."/>
            <person name="Danchin A."/>
            <person name="Wang T.Z."/>
            <person name="Brettin T.S."/>
            <person name="Hauser L.J."/>
            <person name="Land M.L."/>
            <person name="Thompson L.S."/>
        </authorList>
    </citation>
    <scope>NUCLEOTIDE SEQUENCE [LARGE SCALE GENOMIC DNA]</scope>
    <source>
        <strain>DSM 17664 / CCUG 51855 / 37</strain>
    </source>
</reference>
<feature type="chain" id="PRO_0000387061" description="Ribosomal RNA small subunit methyltransferase H">
    <location>
        <begin position="1"/>
        <end position="315"/>
    </location>
</feature>
<feature type="binding site" evidence="1">
    <location>
        <begin position="32"/>
        <end position="34"/>
    </location>
    <ligand>
        <name>S-adenosyl-L-methionine</name>
        <dbReference type="ChEBI" id="CHEBI:59789"/>
    </ligand>
</feature>
<feature type="binding site" evidence="1">
    <location>
        <position position="52"/>
    </location>
    <ligand>
        <name>S-adenosyl-L-methionine</name>
        <dbReference type="ChEBI" id="CHEBI:59789"/>
    </ligand>
</feature>
<feature type="binding site" evidence="1">
    <location>
        <position position="78"/>
    </location>
    <ligand>
        <name>S-adenosyl-L-methionine</name>
        <dbReference type="ChEBI" id="CHEBI:59789"/>
    </ligand>
</feature>
<feature type="binding site" evidence="1">
    <location>
        <position position="100"/>
    </location>
    <ligand>
        <name>S-adenosyl-L-methionine</name>
        <dbReference type="ChEBI" id="CHEBI:59789"/>
    </ligand>
</feature>
<feature type="binding site" evidence="1">
    <location>
        <position position="107"/>
    </location>
    <ligand>
        <name>S-adenosyl-L-methionine</name>
        <dbReference type="ChEBI" id="CHEBI:59789"/>
    </ligand>
</feature>
<name>RSMH_PSYIN</name>
<proteinExistence type="inferred from homology"/>
<organism>
    <name type="scientific">Psychromonas ingrahamii (strain DSM 17664 / CCUG 51855 / 37)</name>
    <dbReference type="NCBI Taxonomy" id="357804"/>
    <lineage>
        <taxon>Bacteria</taxon>
        <taxon>Pseudomonadati</taxon>
        <taxon>Pseudomonadota</taxon>
        <taxon>Gammaproteobacteria</taxon>
        <taxon>Alteromonadales</taxon>
        <taxon>Psychromonadaceae</taxon>
        <taxon>Psychromonas</taxon>
    </lineage>
</organism>
<keyword id="KW-0963">Cytoplasm</keyword>
<keyword id="KW-0489">Methyltransferase</keyword>
<keyword id="KW-1185">Reference proteome</keyword>
<keyword id="KW-0698">rRNA processing</keyword>
<keyword id="KW-0949">S-adenosyl-L-methionine</keyword>
<keyword id="KW-0808">Transferase</keyword>
<gene>
    <name evidence="1" type="primary">rsmH</name>
    <name type="synonym">mraW</name>
    <name type="ordered locus">Ping_1139</name>
</gene>
<dbReference type="EC" id="2.1.1.199" evidence="1"/>
<dbReference type="EMBL" id="CP000510">
    <property type="protein sequence ID" value="ABM02976.1"/>
    <property type="molecule type" value="Genomic_DNA"/>
</dbReference>
<dbReference type="RefSeq" id="WP_011769539.1">
    <property type="nucleotide sequence ID" value="NC_008709.1"/>
</dbReference>
<dbReference type="SMR" id="A1SU11"/>
<dbReference type="STRING" id="357804.Ping_1139"/>
<dbReference type="KEGG" id="pin:Ping_1139"/>
<dbReference type="eggNOG" id="COG0275">
    <property type="taxonomic scope" value="Bacteria"/>
</dbReference>
<dbReference type="HOGENOM" id="CLU_038422_2_0_6"/>
<dbReference type="OrthoDB" id="9806637at2"/>
<dbReference type="Proteomes" id="UP000000639">
    <property type="component" value="Chromosome"/>
</dbReference>
<dbReference type="GO" id="GO:0005737">
    <property type="term" value="C:cytoplasm"/>
    <property type="evidence" value="ECO:0007669"/>
    <property type="project" value="UniProtKB-SubCell"/>
</dbReference>
<dbReference type="GO" id="GO:0071424">
    <property type="term" value="F:rRNA (cytosine-N4-)-methyltransferase activity"/>
    <property type="evidence" value="ECO:0007669"/>
    <property type="project" value="UniProtKB-UniRule"/>
</dbReference>
<dbReference type="GO" id="GO:0070475">
    <property type="term" value="P:rRNA base methylation"/>
    <property type="evidence" value="ECO:0007669"/>
    <property type="project" value="UniProtKB-UniRule"/>
</dbReference>
<dbReference type="FunFam" id="1.10.150.170:FF:000001">
    <property type="entry name" value="Ribosomal RNA small subunit methyltransferase H"/>
    <property type="match status" value="1"/>
</dbReference>
<dbReference type="Gene3D" id="1.10.150.170">
    <property type="entry name" value="Putative methyltransferase TM0872, insert domain"/>
    <property type="match status" value="1"/>
</dbReference>
<dbReference type="Gene3D" id="3.40.50.150">
    <property type="entry name" value="Vaccinia Virus protein VP39"/>
    <property type="match status" value="1"/>
</dbReference>
<dbReference type="HAMAP" id="MF_01007">
    <property type="entry name" value="16SrRNA_methyltr_H"/>
    <property type="match status" value="1"/>
</dbReference>
<dbReference type="InterPro" id="IPR002903">
    <property type="entry name" value="RsmH"/>
</dbReference>
<dbReference type="InterPro" id="IPR023397">
    <property type="entry name" value="SAM-dep_MeTrfase_MraW_recog"/>
</dbReference>
<dbReference type="InterPro" id="IPR029063">
    <property type="entry name" value="SAM-dependent_MTases_sf"/>
</dbReference>
<dbReference type="NCBIfam" id="TIGR00006">
    <property type="entry name" value="16S rRNA (cytosine(1402)-N(4))-methyltransferase RsmH"/>
    <property type="match status" value="1"/>
</dbReference>
<dbReference type="PANTHER" id="PTHR11265:SF0">
    <property type="entry name" value="12S RRNA N4-METHYLCYTIDINE METHYLTRANSFERASE"/>
    <property type="match status" value="1"/>
</dbReference>
<dbReference type="PANTHER" id="PTHR11265">
    <property type="entry name" value="S-ADENOSYL-METHYLTRANSFERASE MRAW"/>
    <property type="match status" value="1"/>
</dbReference>
<dbReference type="Pfam" id="PF01795">
    <property type="entry name" value="Methyltransf_5"/>
    <property type="match status" value="1"/>
</dbReference>
<dbReference type="PIRSF" id="PIRSF004486">
    <property type="entry name" value="MraW"/>
    <property type="match status" value="1"/>
</dbReference>
<dbReference type="SUPFAM" id="SSF81799">
    <property type="entry name" value="Putative methyltransferase TM0872, insert domain"/>
    <property type="match status" value="1"/>
</dbReference>
<dbReference type="SUPFAM" id="SSF53335">
    <property type="entry name" value="S-adenosyl-L-methionine-dependent methyltransferases"/>
    <property type="match status" value="1"/>
</dbReference>
<protein>
    <recommendedName>
        <fullName evidence="1">Ribosomal RNA small subunit methyltransferase H</fullName>
        <ecNumber evidence="1">2.1.1.199</ecNumber>
    </recommendedName>
    <alternativeName>
        <fullName evidence="1">16S rRNA m(4)C1402 methyltransferase</fullName>
    </alternativeName>
    <alternativeName>
        <fullName evidence="1">rRNA (cytosine-N(4)-)-methyltransferase RsmH</fullName>
    </alternativeName>
</protein>
<evidence type="ECO:0000255" key="1">
    <source>
        <dbReference type="HAMAP-Rule" id="MF_01007"/>
    </source>
</evidence>